<organism>
    <name type="scientific">Salmonella paratyphi A (strain ATCC 9150 / SARB42)</name>
    <dbReference type="NCBI Taxonomy" id="295319"/>
    <lineage>
        <taxon>Bacteria</taxon>
        <taxon>Pseudomonadati</taxon>
        <taxon>Pseudomonadota</taxon>
        <taxon>Gammaproteobacteria</taxon>
        <taxon>Enterobacterales</taxon>
        <taxon>Enterobacteriaceae</taxon>
        <taxon>Salmonella</taxon>
    </lineage>
</organism>
<reference key="1">
    <citation type="journal article" date="2004" name="Nat. Genet.">
        <title>Comparison of genome degradation in Paratyphi A and Typhi, human-restricted serovars of Salmonella enterica that cause typhoid.</title>
        <authorList>
            <person name="McClelland M."/>
            <person name="Sanderson K.E."/>
            <person name="Clifton S.W."/>
            <person name="Latreille P."/>
            <person name="Porwollik S."/>
            <person name="Sabo A."/>
            <person name="Meyer R."/>
            <person name="Bieri T."/>
            <person name="Ozersky P."/>
            <person name="McLellan M."/>
            <person name="Harkins C.R."/>
            <person name="Wang C."/>
            <person name="Nguyen C."/>
            <person name="Berghoff A."/>
            <person name="Elliott G."/>
            <person name="Kohlberg S."/>
            <person name="Strong C."/>
            <person name="Du F."/>
            <person name="Carter J."/>
            <person name="Kremizki C."/>
            <person name="Layman D."/>
            <person name="Leonard S."/>
            <person name="Sun H."/>
            <person name="Fulton L."/>
            <person name="Nash W."/>
            <person name="Miner T."/>
            <person name="Minx P."/>
            <person name="Delehaunty K."/>
            <person name="Fronick C."/>
            <person name="Magrini V."/>
            <person name="Nhan M."/>
            <person name="Warren W."/>
            <person name="Florea L."/>
            <person name="Spieth J."/>
            <person name="Wilson R.K."/>
        </authorList>
    </citation>
    <scope>NUCLEOTIDE SEQUENCE [LARGE SCALE GENOMIC DNA]</scope>
    <source>
        <strain>ATCC 9150 / SARB42</strain>
    </source>
</reference>
<proteinExistence type="inferred from homology"/>
<gene>
    <name evidence="1" type="primary">obg</name>
    <name type="ordered locus">SPA3168</name>
</gene>
<sequence>MKFVDEASILVVAGDGGNGCVSFRREKYIPKGGPDGGDGGDGGDVWMEADENLNTLIDYRFEKSFRAERGQNGASRDCTGKRGKDVTIKVPVGTRVIDQGTGETMGDMTKHGQRLLVAKGGWHGLGNTRFKSSVNRTPRQKTNGTPGDKRDLLLELMLLADVGMLGMPNAGKSTFIRAVSAAKPKVADYPFTTLVPSLGVVRMDSEKSFVVADIPGLIEGAAEGAGLGIRFLKHLERCRVLLHLIDIDPIDGSDPVENARIIIGELEKYSQDLAAKPRWLVFNKIDLMDKTEAEEKAKAIAEALGWEGKYYLISAASQLGVKDLCWDVMTFIIENPIAQAEEAKQPEKVEFMWDDYHRQQLAEVEEDADDDWDDDWDEDDEEGVEFIYKR</sequence>
<name>OBG_SALPA</name>
<evidence type="ECO:0000255" key="1">
    <source>
        <dbReference type="HAMAP-Rule" id="MF_01454"/>
    </source>
</evidence>
<evidence type="ECO:0000255" key="2">
    <source>
        <dbReference type="PROSITE-ProRule" id="PRU01231"/>
    </source>
</evidence>
<evidence type="ECO:0000256" key="3">
    <source>
        <dbReference type="SAM" id="MobiDB-lite"/>
    </source>
</evidence>
<dbReference type="EC" id="3.6.5.-" evidence="1"/>
<dbReference type="EMBL" id="CP000026">
    <property type="protein sequence ID" value="AAV78993.1"/>
    <property type="molecule type" value="Genomic_DNA"/>
</dbReference>
<dbReference type="SMR" id="Q5PLB7"/>
<dbReference type="KEGG" id="spt:SPA3168"/>
<dbReference type="HOGENOM" id="CLU_011747_2_0_6"/>
<dbReference type="Proteomes" id="UP000008185">
    <property type="component" value="Chromosome"/>
</dbReference>
<dbReference type="GO" id="GO:0005737">
    <property type="term" value="C:cytoplasm"/>
    <property type="evidence" value="ECO:0007669"/>
    <property type="project" value="UniProtKB-SubCell"/>
</dbReference>
<dbReference type="GO" id="GO:0005525">
    <property type="term" value="F:GTP binding"/>
    <property type="evidence" value="ECO:0007669"/>
    <property type="project" value="UniProtKB-UniRule"/>
</dbReference>
<dbReference type="GO" id="GO:0003924">
    <property type="term" value="F:GTPase activity"/>
    <property type="evidence" value="ECO:0007669"/>
    <property type="project" value="UniProtKB-UniRule"/>
</dbReference>
<dbReference type="GO" id="GO:0000287">
    <property type="term" value="F:magnesium ion binding"/>
    <property type="evidence" value="ECO:0007669"/>
    <property type="project" value="InterPro"/>
</dbReference>
<dbReference type="GO" id="GO:0042254">
    <property type="term" value="P:ribosome biogenesis"/>
    <property type="evidence" value="ECO:0007669"/>
    <property type="project" value="UniProtKB-UniRule"/>
</dbReference>
<dbReference type="CDD" id="cd01898">
    <property type="entry name" value="Obg"/>
    <property type="match status" value="1"/>
</dbReference>
<dbReference type="FunFam" id="2.70.210.12:FF:000001">
    <property type="entry name" value="GTPase Obg"/>
    <property type="match status" value="1"/>
</dbReference>
<dbReference type="FunFam" id="3.40.50.300:FF:000185">
    <property type="entry name" value="GTPase Obg"/>
    <property type="match status" value="1"/>
</dbReference>
<dbReference type="Gene3D" id="2.70.210.12">
    <property type="entry name" value="GTP1/OBG domain"/>
    <property type="match status" value="1"/>
</dbReference>
<dbReference type="Gene3D" id="3.40.50.300">
    <property type="entry name" value="P-loop containing nucleotide triphosphate hydrolases"/>
    <property type="match status" value="1"/>
</dbReference>
<dbReference type="HAMAP" id="MF_01454">
    <property type="entry name" value="GTPase_Obg"/>
    <property type="match status" value="1"/>
</dbReference>
<dbReference type="InterPro" id="IPR031167">
    <property type="entry name" value="G_OBG"/>
</dbReference>
<dbReference type="InterPro" id="IPR006073">
    <property type="entry name" value="GTP-bd"/>
</dbReference>
<dbReference type="InterPro" id="IPR014100">
    <property type="entry name" value="GTP-bd_Obg/CgtA"/>
</dbReference>
<dbReference type="InterPro" id="IPR006074">
    <property type="entry name" value="GTP1-OBG_CS"/>
</dbReference>
<dbReference type="InterPro" id="IPR006169">
    <property type="entry name" value="GTP1_OBG_dom"/>
</dbReference>
<dbReference type="InterPro" id="IPR036726">
    <property type="entry name" value="GTP1_OBG_dom_sf"/>
</dbReference>
<dbReference type="InterPro" id="IPR045086">
    <property type="entry name" value="OBG_GTPase"/>
</dbReference>
<dbReference type="InterPro" id="IPR027417">
    <property type="entry name" value="P-loop_NTPase"/>
</dbReference>
<dbReference type="NCBIfam" id="TIGR02729">
    <property type="entry name" value="Obg_CgtA"/>
    <property type="match status" value="1"/>
</dbReference>
<dbReference type="NCBIfam" id="NF008955">
    <property type="entry name" value="PRK12297.1"/>
    <property type="match status" value="1"/>
</dbReference>
<dbReference type="NCBIfam" id="NF008956">
    <property type="entry name" value="PRK12299.1"/>
    <property type="match status" value="1"/>
</dbReference>
<dbReference type="PANTHER" id="PTHR11702">
    <property type="entry name" value="DEVELOPMENTALLY REGULATED GTP-BINDING PROTEIN-RELATED"/>
    <property type="match status" value="1"/>
</dbReference>
<dbReference type="PANTHER" id="PTHR11702:SF31">
    <property type="entry name" value="MITOCHONDRIAL RIBOSOME-ASSOCIATED GTPASE 2"/>
    <property type="match status" value="1"/>
</dbReference>
<dbReference type="Pfam" id="PF01018">
    <property type="entry name" value="GTP1_OBG"/>
    <property type="match status" value="1"/>
</dbReference>
<dbReference type="Pfam" id="PF01926">
    <property type="entry name" value="MMR_HSR1"/>
    <property type="match status" value="1"/>
</dbReference>
<dbReference type="PIRSF" id="PIRSF002401">
    <property type="entry name" value="GTP_bd_Obg/CgtA"/>
    <property type="match status" value="1"/>
</dbReference>
<dbReference type="PRINTS" id="PR00326">
    <property type="entry name" value="GTP1OBG"/>
</dbReference>
<dbReference type="SUPFAM" id="SSF82051">
    <property type="entry name" value="Obg GTP-binding protein N-terminal domain"/>
    <property type="match status" value="1"/>
</dbReference>
<dbReference type="SUPFAM" id="SSF52540">
    <property type="entry name" value="P-loop containing nucleoside triphosphate hydrolases"/>
    <property type="match status" value="1"/>
</dbReference>
<dbReference type="PROSITE" id="PS51710">
    <property type="entry name" value="G_OBG"/>
    <property type="match status" value="1"/>
</dbReference>
<dbReference type="PROSITE" id="PS00905">
    <property type="entry name" value="GTP1_OBG"/>
    <property type="match status" value="1"/>
</dbReference>
<dbReference type="PROSITE" id="PS51883">
    <property type="entry name" value="OBG"/>
    <property type="match status" value="1"/>
</dbReference>
<accession>Q5PLB7</accession>
<feature type="chain" id="PRO_0000386227" description="GTPase Obg">
    <location>
        <begin position="1"/>
        <end position="390"/>
    </location>
</feature>
<feature type="domain" description="Obg" evidence="2">
    <location>
        <begin position="1"/>
        <end position="159"/>
    </location>
</feature>
<feature type="domain" description="OBG-type G" evidence="1">
    <location>
        <begin position="160"/>
        <end position="333"/>
    </location>
</feature>
<feature type="region of interest" description="Disordered" evidence="3">
    <location>
        <begin position="127"/>
        <end position="147"/>
    </location>
</feature>
<feature type="compositionally biased region" description="Polar residues" evidence="3">
    <location>
        <begin position="129"/>
        <end position="145"/>
    </location>
</feature>
<feature type="binding site" evidence="1">
    <location>
        <begin position="166"/>
        <end position="173"/>
    </location>
    <ligand>
        <name>GTP</name>
        <dbReference type="ChEBI" id="CHEBI:37565"/>
    </ligand>
</feature>
<feature type="binding site" evidence="1">
    <location>
        <position position="173"/>
    </location>
    <ligand>
        <name>Mg(2+)</name>
        <dbReference type="ChEBI" id="CHEBI:18420"/>
    </ligand>
</feature>
<feature type="binding site" evidence="1">
    <location>
        <begin position="191"/>
        <end position="195"/>
    </location>
    <ligand>
        <name>GTP</name>
        <dbReference type="ChEBI" id="CHEBI:37565"/>
    </ligand>
</feature>
<feature type="binding site" evidence="1">
    <location>
        <position position="193"/>
    </location>
    <ligand>
        <name>Mg(2+)</name>
        <dbReference type="ChEBI" id="CHEBI:18420"/>
    </ligand>
</feature>
<feature type="binding site" evidence="1">
    <location>
        <begin position="213"/>
        <end position="216"/>
    </location>
    <ligand>
        <name>GTP</name>
        <dbReference type="ChEBI" id="CHEBI:37565"/>
    </ligand>
</feature>
<feature type="binding site" evidence="1">
    <location>
        <begin position="283"/>
        <end position="286"/>
    </location>
    <ligand>
        <name>GTP</name>
        <dbReference type="ChEBI" id="CHEBI:37565"/>
    </ligand>
</feature>
<feature type="binding site" evidence="1">
    <location>
        <begin position="314"/>
        <end position="316"/>
    </location>
    <ligand>
        <name>GTP</name>
        <dbReference type="ChEBI" id="CHEBI:37565"/>
    </ligand>
</feature>
<keyword id="KW-0963">Cytoplasm</keyword>
<keyword id="KW-0342">GTP-binding</keyword>
<keyword id="KW-0378">Hydrolase</keyword>
<keyword id="KW-0460">Magnesium</keyword>
<keyword id="KW-0479">Metal-binding</keyword>
<keyword id="KW-0547">Nucleotide-binding</keyword>
<comment type="function">
    <text evidence="1">An essential GTPase which binds GTP, GDP and possibly (p)ppGpp with moderate affinity, with high nucleotide exchange rates and a fairly low GTP hydrolysis rate. Plays a role in control of the cell cycle, stress response, ribosome biogenesis and in those bacteria that undergo differentiation, in morphogenesis control.</text>
</comment>
<comment type="cofactor">
    <cofactor evidence="1">
        <name>Mg(2+)</name>
        <dbReference type="ChEBI" id="CHEBI:18420"/>
    </cofactor>
</comment>
<comment type="subunit">
    <text evidence="1">Monomer.</text>
</comment>
<comment type="subcellular location">
    <subcellularLocation>
        <location evidence="1">Cytoplasm</location>
    </subcellularLocation>
</comment>
<comment type="similarity">
    <text evidence="1">Belongs to the TRAFAC class OBG-HflX-like GTPase superfamily. OBG GTPase family.</text>
</comment>
<protein>
    <recommendedName>
        <fullName evidence="1">GTPase Obg</fullName>
        <ecNumber evidence="1">3.6.5.-</ecNumber>
    </recommendedName>
    <alternativeName>
        <fullName evidence="1">GTP-binding protein Obg</fullName>
    </alternativeName>
</protein>